<name>AIM18_VANPO</name>
<protein>
    <recommendedName>
        <fullName>Altered inheritance of mitochondria protein 18, mitochondrial</fullName>
    </recommendedName>
</protein>
<keyword id="KW-0496">Mitochondrion</keyword>
<keyword id="KW-1185">Reference proteome</keyword>
<keyword id="KW-0809">Transit peptide</keyword>
<gene>
    <name type="primary">AIM18</name>
    <name type="synonym">FMP22</name>
    <name type="ORF">Kpol_1000p25</name>
</gene>
<proteinExistence type="inferred from homology"/>
<reference key="1">
    <citation type="journal article" date="2007" name="Proc. Natl. Acad. Sci. U.S.A.">
        <title>Independent sorting-out of thousands of duplicated gene pairs in two yeast species descended from a whole-genome duplication.</title>
        <authorList>
            <person name="Scannell D.R."/>
            <person name="Frank A.C."/>
            <person name="Conant G.C."/>
            <person name="Byrne K.P."/>
            <person name="Woolfit M."/>
            <person name="Wolfe K.H."/>
        </authorList>
    </citation>
    <scope>NUCLEOTIDE SEQUENCE [LARGE SCALE GENOMIC DNA]</scope>
    <source>
        <strain>ATCC 22028 / DSM 70294 / BCRC 21397 / CBS 2163 / NBRC 10782 / NRRL Y-8283 / UCD 57-17</strain>
    </source>
</reference>
<evidence type="ECO:0000250" key="1"/>
<evidence type="ECO:0000255" key="2"/>
<evidence type="ECO:0000305" key="3"/>
<organism>
    <name type="scientific">Vanderwaltozyma polyspora (strain ATCC 22028 / DSM 70294 / BCRC 21397 / CBS 2163 / NBRC 10782 / NRRL Y-8283 / UCD 57-17)</name>
    <name type="common">Kluyveromyces polysporus</name>
    <dbReference type="NCBI Taxonomy" id="436907"/>
    <lineage>
        <taxon>Eukaryota</taxon>
        <taxon>Fungi</taxon>
        <taxon>Dikarya</taxon>
        <taxon>Ascomycota</taxon>
        <taxon>Saccharomycotina</taxon>
        <taxon>Saccharomycetes</taxon>
        <taxon>Saccharomycetales</taxon>
        <taxon>Saccharomycetaceae</taxon>
        <taxon>Vanderwaltozyma</taxon>
    </lineage>
</organism>
<accession>A7TPW4</accession>
<dbReference type="EMBL" id="DS480448">
    <property type="protein sequence ID" value="EDO15712.1"/>
    <property type="molecule type" value="Genomic_DNA"/>
</dbReference>
<dbReference type="RefSeq" id="XP_001643570.1">
    <property type="nucleotide sequence ID" value="XM_001643520.1"/>
</dbReference>
<dbReference type="SMR" id="A7TPW4"/>
<dbReference type="FunCoup" id="A7TPW4">
    <property type="interactions" value="41"/>
</dbReference>
<dbReference type="STRING" id="436907.A7TPW4"/>
<dbReference type="GeneID" id="5543814"/>
<dbReference type="KEGG" id="vpo:Kpol_1000p25"/>
<dbReference type="eggNOG" id="ENOG502RGD3">
    <property type="taxonomic scope" value="Eukaryota"/>
</dbReference>
<dbReference type="HOGENOM" id="CLU_038840_0_0_1"/>
<dbReference type="InParanoid" id="A7TPW4"/>
<dbReference type="OMA" id="PMRNTNF"/>
<dbReference type="OrthoDB" id="18193at2759"/>
<dbReference type="PhylomeDB" id="A7TPW4"/>
<dbReference type="Proteomes" id="UP000000267">
    <property type="component" value="Unassembled WGS sequence"/>
</dbReference>
<dbReference type="GO" id="GO:0005743">
    <property type="term" value="C:mitochondrial inner membrane"/>
    <property type="evidence" value="ECO:0007669"/>
    <property type="project" value="EnsemblFungi"/>
</dbReference>
<dbReference type="GO" id="GO:0020037">
    <property type="term" value="F:heme binding"/>
    <property type="evidence" value="ECO:0007669"/>
    <property type="project" value="EnsemblFungi"/>
</dbReference>
<dbReference type="GO" id="GO:0016872">
    <property type="term" value="F:intramolecular lyase activity"/>
    <property type="evidence" value="ECO:0007669"/>
    <property type="project" value="InterPro"/>
</dbReference>
<dbReference type="Gene3D" id="3.50.70.10">
    <property type="match status" value="1"/>
</dbReference>
<dbReference type="InterPro" id="IPR016087">
    <property type="entry name" value="Chalcone_isomerase"/>
</dbReference>
<dbReference type="InterPro" id="IPR016088">
    <property type="entry name" value="Chalcone_isomerase_3-sand"/>
</dbReference>
<dbReference type="InterPro" id="IPR036298">
    <property type="entry name" value="Chalcone_isomerase_sf"/>
</dbReference>
<dbReference type="PANTHER" id="PTHR47284">
    <property type="entry name" value="FATTY-ACID-BINDING PROTEIN 2"/>
    <property type="match status" value="1"/>
</dbReference>
<dbReference type="PANTHER" id="PTHR47284:SF3">
    <property type="entry name" value="FATTY-ACID-BINDING PROTEIN 2"/>
    <property type="match status" value="1"/>
</dbReference>
<dbReference type="Pfam" id="PF16035">
    <property type="entry name" value="Chalcone_2"/>
    <property type="match status" value="1"/>
</dbReference>
<dbReference type="SUPFAM" id="SSF54626">
    <property type="entry name" value="Chalcone isomerase"/>
    <property type="match status" value="1"/>
</dbReference>
<sequence length="316" mass="34774">MFGRVFNRSSPIIRLSVRTITSLNGARASVNRPLAKTLISNGNHIFNKKLYLLGLFGITSGYYFTISNGGSAIINDENVNDDASKTVSVDSSISPLPVNYSKNEYSLSNDYSLLGYGIRAVTFLKFKIYALGIYVADEDIKSIAKLFSTSYLSSTFIDTDKSKSHPENVKEALNDPKKSLILIGNLLDSGIKMMAKITPVRNTDFNHLRDGITKTVLNHPNANEKKTELENGLAQLKETLSNKGSVAKNDDLFIELKSNGSLVFTHNNRKKNKAIHLGTVTDPIVGKFLFSQYIGGPKPLSPPTKETVTDKIYSIV</sequence>
<comment type="subcellular location">
    <subcellularLocation>
        <location evidence="1">Mitochondrion</location>
    </subcellularLocation>
</comment>
<comment type="similarity">
    <text evidence="3">Belongs to the AIM18/AIM46 family.</text>
</comment>
<feature type="transit peptide" description="Mitochondrion" evidence="2">
    <location>
        <begin position="1"/>
        <end position="41"/>
    </location>
</feature>
<feature type="chain" id="PRO_0000399554" description="Altered inheritance of mitochondria protein 18, mitochondrial">
    <location>
        <begin position="42"/>
        <end position="316"/>
    </location>
</feature>